<name>CDK3_CONCE</name>
<comment type="function">
    <text evidence="2 5">Alpha-D-conopeptides act on postsynaptic membranes, they bind to the nicotinic acetylcholine receptors (nAChR) and thus inhibit them. Through its two C-terminal domains, this homodimeric protein would bind to two nAChR allosteric sites, located outside the nAChR C-loop of the principal binding face and at the adjacent binding interface in a clockwise direction (By similarity). This toxin specifically blocks mammalian neuronal nAChR of the alpha-7/CHRNA7 (IC(50)=0.25 nM), alpha-3-beta-2/CHRNA3-CHRNB2 (IC(50)=2.8 nM), and alpha-4-beta-2/CHRNA4-CHRNB2 (IC(50)=28.6 nM) subtypes (PubMed:19393680). Has no effect on alpha-3-beta-4/CHRNA3-CHRNB4, alpha-4-beta-4/CHRNA4-CHRNB4 and alpha-1-beta-1-epsilon-delta/CHRNA1-CHRNB1-CHRNE-CHRND subtypes of nAChRs (PubMed:19393680).</text>
</comment>
<comment type="subunit">
    <text evidence="4 5">Hetero-, homo- or pseudo-homodimer (identical sequence, different post-translational modifications).</text>
</comment>
<comment type="subcellular location">
    <subcellularLocation>
        <location evidence="5">Secreted</location>
    </subcellularLocation>
</comment>
<comment type="tissue specificity">
    <text evidence="5">Expressed by the venom duct.</text>
</comment>
<comment type="domain">
    <text>The cysteine framework is XX (C-CC-C-CC-C-C-C-C).</text>
</comment>
<comment type="domain">
    <text evidence="2">Displays a mini-granulin fold, a structure composed of two short, stacked beta-hairpins connected by two parallel disulfide bonds. This newly described fold is derived from the same cysteine connectivity as knottins (ICK fold). The name 'mini-granulin fold' comes from the structural homology with the N-terminal region of the human granulin.</text>
</comment>
<comment type="similarity">
    <text evidence="6">Belongs to the conotoxin D superfamily.</text>
</comment>
<accession>C3VVN6</accession>
<reference key="1">
    <citation type="journal article" date="2009" name="Biochemistry">
        <title>Novel alpha D-conopeptides and their precursors identified by cDNA cloning define the D-conotoxin superfamily.</title>
        <authorList>
            <person name="Loughnan M.L."/>
            <person name="Nicke A."/>
            <person name="Lawrence N."/>
            <person name="Lewis R.J."/>
        </authorList>
    </citation>
    <scope>NUCLEOTIDE SEQUENCE [MRNA]</scope>
    <scope>PROTEIN SEQUENCE OF 46-57</scope>
    <scope>GAMMA-CARBOXYGLUTAMATION AT GLU-46 AND GLU-49</scope>
    <scope>HYDROXYLATION AT PRO-55</scope>
    <scope>SUBUNIT</scope>
    <source>
        <tissue>Venom duct</tissue>
    </source>
</reference>
<reference key="2">
    <citation type="journal article" date="2009" name="Toxicon">
        <title>New conopeptides of the D-superfamily selectively inhibiting neuronal nicotinic acetylcholine receptors.</title>
        <authorList>
            <person name="Kauferstein S."/>
            <person name="Kendel Y."/>
            <person name="Nicke A."/>
            <person name="Coronas F.I.V."/>
            <person name="Possani L.D."/>
            <person name="Favreau P."/>
            <person name="Krizaj I."/>
            <person name="Wunder C."/>
            <person name="Kauert G."/>
            <person name="Mebs D."/>
        </authorList>
    </citation>
    <scope>NUCLEOTIDE SEQUENCE [MRNA] OF 21-94</scope>
    <scope>PROTEIN SEQUENCE OF 46-58; 67-74; 76-85 AND 87-91</scope>
    <scope>FUNCTION</scope>
    <scope>SUBUNIT</scope>
    <scope>SUBCELLULAR LOCATION</scope>
    <scope>TISSUE SPECIFICITY</scope>
    <scope>IDENTIFICATION BY MASS SPECTROMETRY</scope>
    <scope>HYDROXYLATION AT PRO-55</scope>
    <source>
        <tissue>Venom</tissue>
        <tissue>Venom duct</tissue>
    </source>
</reference>
<proteinExistence type="evidence at protein level"/>
<evidence type="ECO:0000250" key="1">
    <source>
        <dbReference type="UniProtKB" id="A0A0A0VBX4"/>
    </source>
</evidence>
<evidence type="ECO:0000250" key="2">
    <source>
        <dbReference type="UniProtKB" id="P0C1W6"/>
    </source>
</evidence>
<evidence type="ECO:0000255" key="3"/>
<evidence type="ECO:0000269" key="4">
    <source>
    </source>
</evidence>
<evidence type="ECO:0000269" key="5">
    <source>
    </source>
</evidence>
<evidence type="ECO:0000305" key="6"/>
<keyword id="KW-0008">Acetylcholine receptor inhibiting toxin</keyword>
<keyword id="KW-0903">Direct protein sequencing</keyword>
<keyword id="KW-1015">Disulfide bond</keyword>
<keyword id="KW-0301">Gamma-carboxyglutamic acid</keyword>
<keyword id="KW-0379">Hydroxylation</keyword>
<keyword id="KW-0872">Ion channel impairing toxin</keyword>
<keyword id="KW-0528">Neurotoxin</keyword>
<keyword id="KW-0629">Postsynaptic neurotoxin</keyword>
<keyword id="KW-0964">Secreted</keyword>
<keyword id="KW-0732">Signal</keyword>
<keyword id="KW-0800">Toxin</keyword>
<dbReference type="EMBL" id="FJ896006">
    <property type="protein sequence ID" value="ACP50601.1"/>
    <property type="molecule type" value="mRNA"/>
</dbReference>
<dbReference type="SMR" id="C3VVN6"/>
<dbReference type="ConoServer" id="3590">
    <property type="toxin name" value="Cp20.3 precursor"/>
</dbReference>
<dbReference type="GO" id="GO:0005576">
    <property type="term" value="C:extracellular region"/>
    <property type="evidence" value="ECO:0007669"/>
    <property type="project" value="UniProtKB-SubCell"/>
</dbReference>
<dbReference type="GO" id="GO:0035792">
    <property type="term" value="C:host cell postsynaptic membrane"/>
    <property type="evidence" value="ECO:0007669"/>
    <property type="project" value="UniProtKB-KW"/>
</dbReference>
<dbReference type="GO" id="GO:0030550">
    <property type="term" value="F:acetylcholine receptor inhibitor activity"/>
    <property type="evidence" value="ECO:0007669"/>
    <property type="project" value="UniProtKB-KW"/>
</dbReference>
<dbReference type="GO" id="GO:0099106">
    <property type="term" value="F:ion channel regulator activity"/>
    <property type="evidence" value="ECO:0007669"/>
    <property type="project" value="UniProtKB-KW"/>
</dbReference>
<dbReference type="GO" id="GO:0090729">
    <property type="term" value="F:toxin activity"/>
    <property type="evidence" value="ECO:0007669"/>
    <property type="project" value="UniProtKB-KW"/>
</dbReference>
<sequence>MPKLAVVLLVLLILPLSYFDAAGGQAVQGDRRGNGLARYLQRGDREVQECQVDTPGSSWGKCCMTRMCGTMCCSRSVCTCVYHWRRGHGCSCPG</sequence>
<protein>
    <recommendedName>
        <fullName>Alpha-conotoxin Cp20.3</fullName>
    </recommendedName>
    <alternativeName>
        <fullName>Conopeptide alpha-D-Cp</fullName>
    </alternativeName>
</protein>
<organism>
    <name type="scientific">Conus capitaneus</name>
    <name type="common">Captain cone</name>
    <dbReference type="NCBI Taxonomy" id="89439"/>
    <lineage>
        <taxon>Eukaryota</taxon>
        <taxon>Metazoa</taxon>
        <taxon>Spiralia</taxon>
        <taxon>Lophotrochozoa</taxon>
        <taxon>Mollusca</taxon>
        <taxon>Gastropoda</taxon>
        <taxon>Caenogastropoda</taxon>
        <taxon>Neogastropoda</taxon>
        <taxon>Conoidea</taxon>
        <taxon>Conidae</taxon>
        <taxon>Conus</taxon>
        <taxon>Rhizoconus</taxon>
    </lineage>
</organism>
<feature type="signal peptide" evidence="3">
    <location>
        <begin position="1"/>
        <end position="24"/>
    </location>
</feature>
<feature type="propeptide" id="PRO_0000388729" evidence="4 5">
    <location>
        <begin position="25"/>
        <end position="45"/>
    </location>
</feature>
<feature type="chain" id="PRO_0000388730" description="Alpha-conotoxin Cp20.3">
    <location>
        <begin position="46"/>
        <end position="94"/>
    </location>
</feature>
<feature type="modified residue" description="4-carboxyglutamate; partial" evidence="4">
    <location>
        <position position="46"/>
    </location>
</feature>
<feature type="modified residue" description="4-carboxyglutamate" evidence="4">
    <location>
        <position position="49"/>
    </location>
</feature>
<feature type="modified residue" description="4-hydroxyproline" evidence="4 5">
    <location>
        <position position="55"/>
    </location>
</feature>
<feature type="disulfide bond" description="Interchain (with C-63)" evidence="1">
    <location>
        <position position="50"/>
    </location>
</feature>
<feature type="disulfide bond" description="Interchain (with C-51)" evidence="1">
    <location>
        <position position="62"/>
    </location>
</feature>
<feature type="disulfide bond" evidence="1">
    <location>
        <begin position="63"/>
        <end position="72"/>
    </location>
</feature>
<feature type="disulfide bond" evidence="1">
    <location>
        <begin position="68"/>
        <end position="80"/>
    </location>
</feature>
<feature type="disulfide bond" evidence="1">
    <location>
        <begin position="73"/>
        <end position="90"/>
    </location>
</feature>
<feature type="disulfide bond" evidence="1">
    <location>
        <begin position="78"/>
        <end position="92"/>
    </location>
</feature>
<feature type="sequence conflict" description="In Ref. 2; ACP50601." evidence="6" ref="2">
    <original>A</original>
    <variation>V</variation>
    <location>
        <position position="26"/>
    </location>
</feature>
<feature type="sequence conflict" description="In Ref. 2; AA sequence." evidence="6" ref="2">
    <original>E</original>
    <variation>D</variation>
    <location>
        <position position="46"/>
    </location>
</feature>
<feature type="sequence conflict" description="In Ref. 2; AA sequence." evidence="6" ref="2">
    <original>Q</original>
    <variation>R</variation>
    <location>
        <position position="48"/>
    </location>
</feature>
<feature type="sequence conflict" description="In Ref. 2; AA sequence." evidence="6" ref="2">
    <original>SW</original>
    <variation>RS</variation>
    <location>
        <begin position="58"/>
        <end position="59"/>
    </location>
</feature>
<feature type="sequence conflict" description="In Ref. 2; AA sequence." evidence="6" ref="2">
    <original>MTR</original>
    <variation>SMQ</variation>
    <location>
        <begin position="64"/>
        <end position="66"/>
    </location>
</feature>
<feature type="sequence conflict" description="In Ref. 2; AA sequence." evidence="6" ref="2">
    <original>S</original>
    <variation>R</variation>
    <location>
        <position position="91"/>
    </location>
</feature>